<keyword id="KW-0687">Ribonucleoprotein</keyword>
<keyword id="KW-0689">Ribosomal protein</keyword>
<keyword id="KW-0694">RNA-binding</keyword>
<keyword id="KW-0699">rRNA-binding</keyword>
<proteinExistence type="inferred from homology"/>
<protein>
    <recommendedName>
        <fullName evidence="1">Small ribosomal subunit protein uS8</fullName>
    </recommendedName>
    <alternativeName>
        <fullName evidence="2">30S ribosomal protein S8</fullName>
    </alternativeName>
</protein>
<evidence type="ECO:0000255" key="1">
    <source>
        <dbReference type="HAMAP-Rule" id="MF_01302"/>
    </source>
</evidence>
<evidence type="ECO:0000305" key="2"/>
<gene>
    <name evidence="1" type="primary">rpsH</name>
    <name type="ordered locus">BRE_498</name>
</gene>
<reference key="1">
    <citation type="journal article" date="2008" name="PLoS Genet.">
        <title>The genome of Borrelia recurrentis, the agent of deadly louse-borne relapsing fever, is a degraded subset of tick-borne Borrelia duttonii.</title>
        <authorList>
            <person name="Lescot M."/>
            <person name="Audic S."/>
            <person name="Robert C."/>
            <person name="Nguyen T.T."/>
            <person name="Blanc G."/>
            <person name="Cutler S.J."/>
            <person name="Wincker P."/>
            <person name="Couloux A."/>
            <person name="Claverie J.-M."/>
            <person name="Raoult D."/>
            <person name="Drancourt M."/>
        </authorList>
    </citation>
    <scope>NUCLEOTIDE SEQUENCE [LARGE SCALE GENOMIC DNA]</scope>
    <source>
        <strain>A1</strain>
    </source>
</reference>
<dbReference type="EMBL" id="CP000993">
    <property type="protein sequence ID" value="ACH94730.1"/>
    <property type="molecule type" value="Genomic_DNA"/>
</dbReference>
<dbReference type="RefSeq" id="WP_012538246.1">
    <property type="nucleotide sequence ID" value="NZ_CP169983.1"/>
</dbReference>
<dbReference type="SMR" id="B5RPJ6"/>
<dbReference type="KEGG" id="bre:BRE_498"/>
<dbReference type="HOGENOM" id="CLU_098428_0_2_12"/>
<dbReference type="Proteomes" id="UP000000612">
    <property type="component" value="Chromosome"/>
</dbReference>
<dbReference type="GO" id="GO:1990904">
    <property type="term" value="C:ribonucleoprotein complex"/>
    <property type="evidence" value="ECO:0007669"/>
    <property type="project" value="UniProtKB-KW"/>
</dbReference>
<dbReference type="GO" id="GO:0005840">
    <property type="term" value="C:ribosome"/>
    <property type="evidence" value="ECO:0007669"/>
    <property type="project" value="UniProtKB-KW"/>
</dbReference>
<dbReference type="GO" id="GO:0019843">
    <property type="term" value="F:rRNA binding"/>
    <property type="evidence" value="ECO:0007669"/>
    <property type="project" value="UniProtKB-UniRule"/>
</dbReference>
<dbReference type="GO" id="GO:0003735">
    <property type="term" value="F:structural constituent of ribosome"/>
    <property type="evidence" value="ECO:0007669"/>
    <property type="project" value="InterPro"/>
</dbReference>
<dbReference type="GO" id="GO:0006412">
    <property type="term" value="P:translation"/>
    <property type="evidence" value="ECO:0007669"/>
    <property type="project" value="UniProtKB-UniRule"/>
</dbReference>
<dbReference type="FunFam" id="3.30.1490.10:FF:000001">
    <property type="entry name" value="30S ribosomal protein S8"/>
    <property type="match status" value="1"/>
</dbReference>
<dbReference type="Gene3D" id="3.30.1370.30">
    <property type="match status" value="1"/>
</dbReference>
<dbReference type="Gene3D" id="3.30.1490.10">
    <property type="match status" value="1"/>
</dbReference>
<dbReference type="HAMAP" id="MF_01302_B">
    <property type="entry name" value="Ribosomal_uS8_B"/>
    <property type="match status" value="1"/>
</dbReference>
<dbReference type="InterPro" id="IPR000630">
    <property type="entry name" value="Ribosomal_uS8"/>
</dbReference>
<dbReference type="InterPro" id="IPR047863">
    <property type="entry name" value="Ribosomal_uS8_CS"/>
</dbReference>
<dbReference type="InterPro" id="IPR035987">
    <property type="entry name" value="Ribosomal_uS8_sf"/>
</dbReference>
<dbReference type="NCBIfam" id="NF001109">
    <property type="entry name" value="PRK00136.1"/>
    <property type="match status" value="1"/>
</dbReference>
<dbReference type="PANTHER" id="PTHR11758">
    <property type="entry name" value="40S RIBOSOMAL PROTEIN S15A"/>
    <property type="match status" value="1"/>
</dbReference>
<dbReference type="Pfam" id="PF00410">
    <property type="entry name" value="Ribosomal_S8"/>
    <property type="match status" value="1"/>
</dbReference>
<dbReference type="SUPFAM" id="SSF56047">
    <property type="entry name" value="Ribosomal protein S8"/>
    <property type="match status" value="1"/>
</dbReference>
<dbReference type="PROSITE" id="PS00053">
    <property type="entry name" value="RIBOSOMAL_S8"/>
    <property type="match status" value="1"/>
</dbReference>
<comment type="function">
    <text evidence="1">One of the primary rRNA binding proteins, it binds directly to 16S rRNA central domain where it helps coordinate assembly of the platform of the 30S subunit.</text>
</comment>
<comment type="subunit">
    <text evidence="1">Part of the 30S ribosomal subunit. Contacts proteins S5 and S12.</text>
</comment>
<comment type="similarity">
    <text evidence="1">Belongs to the universal ribosomal protein uS8 family.</text>
</comment>
<name>RS8_BORRA</name>
<sequence>MAVTHSVGDMLTKIRNASRVKHESVDLKMSKINRSILDILKEEGYIKNYNIFDKKGIPFIKAMLNYDGKRNPAINRIDAISTPGRKVYSSYKNMPRIKNGYGILIVSSSKGVITGKQAKDNKVGGELICSVW</sequence>
<accession>B5RPJ6</accession>
<feature type="chain" id="PRO_1000140519" description="Small ribosomal subunit protein uS8">
    <location>
        <begin position="1"/>
        <end position="132"/>
    </location>
</feature>
<organism>
    <name type="scientific">Borrelia recurrentis (strain A1)</name>
    <dbReference type="NCBI Taxonomy" id="412418"/>
    <lineage>
        <taxon>Bacteria</taxon>
        <taxon>Pseudomonadati</taxon>
        <taxon>Spirochaetota</taxon>
        <taxon>Spirochaetia</taxon>
        <taxon>Spirochaetales</taxon>
        <taxon>Borreliaceae</taxon>
        <taxon>Borrelia</taxon>
    </lineage>
</organism>